<comment type="function">
    <text evidence="1">Catalyzes the NADPH-dependent reduction of N-acetyl-5-glutamyl phosphate to yield N-acetyl-L-glutamate 5-semialdehyde.</text>
</comment>
<comment type="catalytic activity">
    <reaction evidence="1">
        <text>N-acetyl-L-glutamate 5-semialdehyde + phosphate + NADP(+) = N-acetyl-L-glutamyl 5-phosphate + NADPH + H(+)</text>
        <dbReference type="Rhea" id="RHEA:21588"/>
        <dbReference type="ChEBI" id="CHEBI:15378"/>
        <dbReference type="ChEBI" id="CHEBI:29123"/>
        <dbReference type="ChEBI" id="CHEBI:43474"/>
        <dbReference type="ChEBI" id="CHEBI:57783"/>
        <dbReference type="ChEBI" id="CHEBI:57936"/>
        <dbReference type="ChEBI" id="CHEBI:58349"/>
        <dbReference type="EC" id="1.2.1.38"/>
    </reaction>
</comment>
<comment type="pathway">
    <text evidence="1">Amino-acid biosynthesis; L-arginine biosynthesis; N(2)-acetyl-L-ornithine from L-glutamate: step 3/4.</text>
</comment>
<comment type="subcellular location">
    <subcellularLocation>
        <location evidence="1">Cytoplasm</location>
    </subcellularLocation>
</comment>
<comment type="similarity">
    <text evidence="1">Belongs to the NAGSA dehydrogenase family. Type 1 subfamily.</text>
</comment>
<reference key="1">
    <citation type="journal article" date="2009" name="BMC Microbiol.">
        <title>The genome sequence of Geobacter metallireducens: features of metabolism, physiology and regulation common and dissimilar to Geobacter sulfurreducens.</title>
        <authorList>
            <person name="Aklujkar M."/>
            <person name="Krushkal J."/>
            <person name="DiBartolo G."/>
            <person name="Lapidus A."/>
            <person name="Land M.L."/>
            <person name="Lovley D.R."/>
        </authorList>
    </citation>
    <scope>NUCLEOTIDE SEQUENCE [LARGE SCALE GENOMIC DNA]</scope>
    <source>
        <strain>ATCC 53774 / DSM 7210 / GS-15</strain>
    </source>
</reference>
<feature type="chain" id="PRO_1000010996" description="N-acetyl-gamma-glutamyl-phosphate reductase">
    <location>
        <begin position="1"/>
        <end position="346"/>
    </location>
</feature>
<feature type="active site" evidence="1">
    <location>
        <position position="149"/>
    </location>
</feature>
<protein>
    <recommendedName>
        <fullName evidence="1">N-acetyl-gamma-glutamyl-phosphate reductase</fullName>
        <shortName evidence="1">AGPR</shortName>
        <ecNumber evidence="1">1.2.1.38</ecNumber>
    </recommendedName>
    <alternativeName>
        <fullName evidence="1">N-acetyl-glutamate semialdehyde dehydrogenase</fullName>
        <shortName evidence="1">NAGSA dehydrogenase</shortName>
    </alternativeName>
</protein>
<proteinExistence type="inferred from homology"/>
<accession>Q39Y23</accession>
<sequence length="346" mass="37483">MLNVAVVGASGYTGVELLRLLYCHPEVAVTCITSEQSAGRPVAAVFPTLRSRYTQVLENLEPVKVAQKADLIFTALPHKAAMEVVPTFLELGKRVVDLSADYRFNDPAVYEKWYEPHMNPENLKEAVYGLPEIRREKIGDAWLVGNPGCYPTSVILGLMPLLKKRLIDPSTIIADSKSGVSGAGRGAKVENLYCEVNDGFKAYGVGGVHRHIPEIEQELSLLAGGPITITFTPHLVPMDRGILSTIYARLTGTDSVAELVKLYAEFYEGEPFVRVLPAGNVPSTAHVRGSNFCDIGLAVDSRTGRVIVVSAIDNLVKGAAGQAVQNMNIMYGFPETMGLEGLPLFP</sequence>
<gene>
    <name evidence="1" type="primary">argC</name>
    <name type="ordered locus">Gmet_0608</name>
</gene>
<keyword id="KW-0028">Amino-acid biosynthesis</keyword>
<keyword id="KW-0055">Arginine biosynthesis</keyword>
<keyword id="KW-0963">Cytoplasm</keyword>
<keyword id="KW-0521">NADP</keyword>
<keyword id="KW-0560">Oxidoreductase</keyword>
<keyword id="KW-1185">Reference proteome</keyword>
<name>ARGC_GEOMG</name>
<organism>
    <name type="scientific">Geobacter metallireducens (strain ATCC 53774 / DSM 7210 / GS-15)</name>
    <dbReference type="NCBI Taxonomy" id="269799"/>
    <lineage>
        <taxon>Bacteria</taxon>
        <taxon>Pseudomonadati</taxon>
        <taxon>Thermodesulfobacteriota</taxon>
        <taxon>Desulfuromonadia</taxon>
        <taxon>Geobacterales</taxon>
        <taxon>Geobacteraceae</taxon>
        <taxon>Geobacter</taxon>
    </lineage>
</organism>
<dbReference type="EC" id="1.2.1.38" evidence="1"/>
<dbReference type="EMBL" id="CP000148">
    <property type="protein sequence ID" value="ABB30851.1"/>
    <property type="molecule type" value="Genomic_DNA"/>
</dbReference>
<dbReference type="RefSeq" id="WP_004514738.1">
    <property type="nucleotide sequence ID" value="NC_007517.1"/>
</dbReference>
<dbReference type="SMR" id="Q39Y23"/>
<dbReference type="STRING" id="269799.Gmet_0608"/>
<dbReference type="KEGG" id="gme:Gmet_0608"/>
<dbReference type="eggNOG" id="COG0002">
    <property type="taxonomic scope" value="Bacteria"/>
</dbReference>
<dbReference type="HOGENOM" id="CLU_006384_0_1_7"/>
<dbReference type="UniPathway" id="UPA00068">
    <property type="reaction ID" value="UER00108"/>
</dbReference>
<dbReference type="Proteomes" id="UP000007073">
    <property type="component" value="Chromosome"/>
</dbReference>
<dbReference type="GO" id="GO:0005737">
    <property type="term" value="C:cytoplasm"/>
    <property type="evidence" value="ECO:0007669"/>
    <property type="project" value="UniProtKB-SubCell"/>
</dbReference>
<dbReference type="GO" id="GO:0003942">
    <property type="term" value="F:N-acetyl-gamma-glutamyl-phosphate reductase activity"/>
    <property type="evidence" value="ECO:0007669"/>
    <property type="project" value="UniProtKB-UniRule"/>
</dbReference>
<dbReference type="GO" id="GO:0051287">
    <property type="term" value="F:NAD binding"/>
    <property type="evidence" value="ECO:0007669"/>
    <property type="project" value="InterPro"/>
</dbReference>
<dbReference type="GO" id="GO:0070401">
    <property type="term" value="F:NADP+ binding"/>
    <property type="evidence" value="ECO:0007669"/>
    <property type="project" value="InterPro"/>
</dbReference>
<dbReference type="GO" id="GO:0006526">
    <property type="term" value="P:L-arginine biosynthetic process"/>
    <property type="evidence" value="ECO:0007669"/>
    <property type="project" value="UniProtKB-UniRule"/>
</dbReference>
<dbReference type="CDD" id="cd23934">
    <property type="entry name" value="AGPR_1_C"/>
    <property type="match status" value="1"/>
</dbReference>
<dbReference type="CDD" id="cd17895">
    <property type="entry name" value="AGPR_1_N"/>
    <property type="match status" value="1"/>
</dbReference>
<dbReference type="FunFam" id="3.30.360.10:FF:000014">
    <property type="entry name" value="N-acetyl-gamma-glutamyl-phosphate reductase"/>
    <property type="match status" value="1"/>
</dbReference>
<dbReference type="Gene3D" id="3.30.360.10">
    <property type="entry name" value="Dihydrodipicolinate Reductase, domain 2"/>
    <property type="match status" value="1"/>
</dbReference>
<dbReference type="Gene3D" id="3.40.50.720">
    <property type="entry name" value="NAD(P)-binding Rossmann-like Domain"/>
    <property type="match status" value="1"/>
</dbReference>
<dbReference type="HAMAP" id="MF_00150">
    <property type="entry name" value="ArgC_type1"/>
    <property type="match status" value="1"/>
</dbReference>
<dbReference type="InterPro" id="IPR023013">
    <property type="entry name" value="AGPR_AS"/>
</dbReference>
<dbReference type="InterPro" id="IPR000706">
    <property type="entry name" value="AGPR_type-1"/>
</dbReference>
<dbReference type="InterPro" id="IPR036291">
    <property type="entry name" value="NAD(P)-bd_dom_sf"/>
</dbReference>
<dbReference type="InterPro" id="IPR050085">
    <property type="entry name" value="NAGSA_dehydrogenase"/>
</dbReference>
<dbReference type="InterPro" id="IPR000534">
    <property type="entry name" value="Semialdehyde_DH_NAD-bd"/>
</dbReference>
<dbReference type="NCBIfam" id="TIGR01850">
    <property type="entry name" value="argC"/>
    <property type="match status" value="1"/>
</dbReference>
<dbReference type="PANTHER" id="PTHR32338:SF10">
    <property type="entry name" value="N-ACETYL-GAMMA-GLUTAMYL-PHOSPHATE REDUCTASE, CHLOROPLASTIC-RELATED"/>
    <property type="match status" value="1"/>
</dbReference>
<dbReference type="PANTHER" id="PTHR32338">
    <property type="entry name" value="N-ACETYL-GAMMA-GLUTAMYL-PHOSPHATE REDUCTASE, CHLOROPLASTIC-RELATED-RELATED"/>
    <property type="match status" value="1"/>
</dbReference>
<dbReference type="Pfam" id="PF01118">
    <property type="entry name" value="Semialdhyde_dh"/>
    <property type="match status" value="1"/>
</dbReference>
<dbReference type="Pfam" id="PF22698">
    <property type="entry name" value="Semialdhyde_dhC_1"/>
    <property type="match status" value="1"/>
</dbReference>
<dbReference type="SMART" id="SM00859">
    <property type="entry name" value="Semialdhyde_dh"/>
    <property type="match status" value="1"/>
</dbReference>
<dbReference type="SUPFAM" id="SSF55347">
    <property type="entry name" value="Glyceraldehyde-3-phosphate dehydrogenase-like, C-terminal domain"/>
    <property type="match status" value="1"/>
</dbReference>
<dbReference type="SUPFAM" id="SSF51735">
    <property type="entry name" value="NAD(P)-binding Rossmann-fold domains"/>
    <property type="match status" value="1"/>
</dbReference>
<dbReference type="PROSITE" id="PS01224">
    <property type="entry name" value="ARGC"/>
    <property type="match status" value="1"/>
</dbReference>
<evidence type="ECO:0000255" key="1">
    <source>
        <dbReference type="HAMAP-Rule" id="MF_00150"/>
    </source>
</evidence>